<accession>O14640</accession>
<accession>Q5TA33</accession>
<accession>Q5TA35</accession>
<feature type="chain" id="PRO_0000145742" description="Segment polarity protein dishevelled homolog DVL-1">
    <location>
        <begin position="1"/>
        <end position="695"/>
    </location>
</feature>
<feature type="domain" description="DIX" evidence="5">
    <location>
        <begin position="1"/>
        <end position="85"/>
    </location>
</feature>
<feature type="domain" description="PDZ" evidence="6">
    <location>
        <begin position="251"/>
        <end position="323"/>
    </location>
</feature>
<feature type="domain" description="DEP" evidence="4">
    <location>
        <begin position="425"/>
        <end position="499"/>
    </location>
</feature>
<feature type="region of interest" description="Disordered" evidence="7">
    <location>
        <begin position="89"/>
        <end position="237"/>
    </location>
</feature>
<feature type="region of interest" description="Disordered" evidence="7">
    <location>
        <begin position="543"/>
        <end position="667"/>
    </location>
</feature>
<feature type="compositionally biased region" description="Basic residues" evidence="7">
    <location>
        <begin position="142"/>
        <end position="151"/>
    </location>
</feature>
<feature type="compositionally biased region" description="Basic and acidic residues" evidence="7">
    <location>
        <begin position="152"/>
        <end position="171"/>
    </location>
</feature>
<feature type="compositionally biased region" description="Low complexity" evidence="7">
    <location>
        <begin position="176"/>
        <end position="192"/>
    </location>
</feature>
<feature type="compositionally biased region" description="Low complexity" evidence="7">
    <location>
        <begin position="200"/>
        <end position="214"/>
    </location>
</feature>
<feature type="compositionally biased region" description="Basic residues" evidence="7">
    <location>
        <begin position="215"/>
        <end position="228"/>
    </location>
</feature>
<feature type="compositionally biased region" description="Low complexity" evidence="7">
    <location>
        <begin position="551"/>
        <end position="580"/>
    </location>
</feature>
<feature type="compositionally biased region" description="Polar residues" evidence="7">
    <location>
        <begin position="625"/>
        <end position="636"/>
    </location>
</feature>
<feature type="modified residue" description="Phosphoserine" evidence="3">
    <location>
        <position position="194"/>
    </location>
</feature>
<feature type="splice variant" id="VSP_024460" description="In isoform 2." evidence="19">
    <original>GTSPCSSAVTRTSSSSLTSSVPGAPQ</original>
    <variation>E</variation>
    <location>
        <begin position="378"/>
        <end position="403"/>
    </location>
</feature>
<feature type="sequence conflict" description="In Ref. 1; AAB65242." evidence="20" ref="1">
    <original>A</original>
    <variation>G</variation>
    <location>
        <position position="2"/>
    </location>
</feature>
<feature type="sequence conflict" description="In Ref. 1; AAB65242." evidence="20" ref="1">
    <original>A</original>
    <variation>P</variation>
    <location>
        <position position="157"/>
    </location>
</feature>
<feature type="strand" evidence="21">
    <location>
        <begin position="249"/>
        <end position="254"/>
    </location>
</feature>
<feature type="strand" evidence="21">
    <location>
        <begin position="264"/>
        <end position="267"/>
    </location>
</feature>
<feature type="strand" evidence="21">
    <location>
        <begin position="279"/>
        <end position="283"/>
    </location>
</feature>
<feature type="helix" evidence="21">
    <location>
        <begin position="288"/>
        <end position="292"/>
    </location>
</feature>
<feature type="strand" evidence="21">
    <location>
        <begin position="300"/>
        <end position="304"/>
    </location>
</feature>
<feature type="helix" evidence="21">
    <location>
        <begin position="314"/>
        <end position="326"/>
    </location>
</feature>
<feature type="strand" evidence="21">
    <location>
        <begin position="327"/>
        <end position="329"/>
    </location>
</feature>
<feature type="strand" evidence="21">
    <location>
        <begin position="331"/>
        <end position="336"/>
    </location>
</feature>
<dbReference type="EMBL" id="AF006011">
    <property type="protein sequence ID" value="AAB65242.1"/>
    <property type="molecule type" value="mRNA"/>
</dbReference>
<dbReference type="EMBL" id="AL139287">
    <property type="status" value="NOT_ANNOTATED_CDS"/>
    <property type="molecule type" value="Genomic_DNA"/>
</dbReference>
<dbReference type="CCDS" id="CCDS22.1">
    <molecule id="O14640-2"/>
</dbReference>
<dbReference type="CCDS" id="CCDS81252.1">
    <molecule id="O14640-1"/>
</dbReference>
<dbReference type="RefSeq" id="NP_001317240.1">
    <molecule id="O14640-1"/>
    <property type="nucleotide sequence ID" value="NM_001330311.2"/>
</dbReference>
<dbReference type="RefSeq" id="NP_004412.2">
    <molecule id="O14640-2"/>
    <property type="nucleotide sequence ID" value="NM_004421.2"/>
</dbReference>
<dbReference type="PDB" id="6LCA">
    <property type="method" value="X-ray"/>
    <property type="resolution" value="2.40 A"/>
    <property type="chains" value="A/B/C/D/E/F/G/H=246-340"/>
</dbReference>
<dbReference type="PDB" id="6LCB">
    <property type="method" value="X-ray"/>
    <property type="resolution" value="1.40 A"/>
    <property type="chains" value="A=246-340"/>
</dbReference>
<dbReference type="PDB" id="6TTK">
    <property type="method" value="X-ray"/>
    <property type="resolution" value="2.38 A"/>
    <property type="chains" value="E/F/G/H=650-664"/>
</dbReference>
<dbReference type="PDBsum" id="6LCA"/>
<dbReference type="PDBsum" id="6LCB"/>
<dbReference type="PDBsum" id="6TTK"/>
<dbReference type="SMR" id="O14640"/>
<dbReference type="BioGRID" id="108188">
    <property type="interactions" value="129"/>
</dbReference>
<dbReference type="CORUM" id="O14640"/>
<dbReference type="DIP" id="DIP-40773N"/>
<dbReference type="FunCoup" id="O14640">
    <property type="interactions" value="1172"/>
</dbReference>
<dbReference type="IntAct" id="O14640">
    <property type="interactions" value="56"/>
</dbReference>
<dbReference type="MINT" id="O14640"/>
<dbReference type="STRING" id="9606.ENSP00000368166"/>
<dbReference type="BindingDB" id="O14640"/>
<dbReference type="ChEMBL" id="CHEMBL6027"/>
<dbReference type="GlyGen" id="O14640">
    <property type="glycosylation" value="1 site, 1 O-linked glycan (1 site)"/>
</dbReference>
<dbReference type="iPTMnet" id="O14640"/>
<dbReference type="PhosphoSitePlus" id="O14640"/>
<dbReference type="BioMuta" id="DVL1"/>
<dbReference type="jPOST" id="O14640"/>
<dbReference type="MassIVE" id="O14640"/>
<dbReference type="PaxDb" id="9606-ENSP00000368169"/>
<dbReference type="PeptideAtlas" id="O14640"/>
<dbReference type="ProteomicsDB" id="48138">
    <molecule id="O14640-1"/>
</dbReference>
<dbReference type="ProteomicsDB" id="48139">
    <molecule id="O14640-2"/>
</dbReference>
<dbReference type="Pumba" id="O14640"/>
<dbReference type="Antibodypedia" id="26291">
    <property type="antibodies" value="257 antibodies from 34 providers"/>
</dbReference>
<dbReference type="DNASU" id="1855"/>
<dbReference type="Ensembl" id="ENST00000378888.10">
    <molecule id="O14640-1"/>
    <property type="protein sequence ID" value="ENSP00000368166.5"/>
    <property type="gene ID" value="ENSG00000107404.21"/>
</dbReference>
<dbReference type="Ensembl" id="ENST00000378891.9">
    <molecule id="O14640-2"/>
    <property type="protein sequence ID" value="ENSP00000368169.5"/>
    <property type="gene ID" value="ENSG00000107404.21"/>
</dbReference>
<dbReference type="GeneID" id="1855"/>
<dbReference type="KEGG" id="hsa:1855"/>
<dbReference type="MANE-Select" id="ENST00000378888.10">
    <property type="protein sequence ID" value="ENSP00000368166.5"/>
    <property type="RefSeq nucleotide sequence ID" value="NM_001330311.2"/>
    <property type="RefSeq protein sequence ID" value="NP_001317240.1"/>
</dbReference>
<dbReference type="UCSC" id="uc001aer.5">
    <molecule id="O14640-1"/>
    <property type="organism name" value="human"/>
</dbReference>
<dbReference type="AGR" id="HGNC:3084"/>
<dbReference type="CTD" id="1855"/>
<dbReference type="DisGeNET" id="1855"/>
<dbReference type="GeneCards" id="DVL1"/>
<dbReference type="GeneReviews" id="DVL1"/>
<dbReference type="HGNC" id="HGNC:3084">
    <property type="gene designation" value="DVL1"/>
</dbReference>
<dbReference type="HPA" id="ENSG00000107404">
    <property type="expression patterns" value="Tissue enhanced (skeletal)"/>
</dbReference>
<dbReference type="MalaCards" id="DVL1"/>
<dbReference type="MIM" id="601365">
    <property type="type" value="gene"/>
</dbReference>
<dbReference type="MIM" id="616331">
    <property type="type" value="phenotype"/>
</dbReference>
<dbReference type="neXtProt" id="NX_O14640"/>
<dbReference type="OpenTargets" id="ENSG00000107404"/>
<dbReference type="Orphanet" id="3107">
    <property type="disease" value="Autosomal dominant Robinow syndrome"/>
</dbReference>
<dbReference type="PharmGKB" id="PA27540"/>
<dbReference type="VEuPathDB" id="HostDB:ENSG00000107404"/>
<dbReference type="eggNOG" id="KOG3571">
    <property type="taxonomic scope" value="Eukaryota"/>
</dbReference>
<dbReference type="GeneTree" id="ENSGT00950000182903"/>
<dbReference type="HOGENOM" id="CLU_012601_1_0_1"/>
<dbReference type="InParanoid" id="O14640"/>
<dbReference type="OMA" id="GTFPRYG"/>
<dbReference type="OrthoDB" id="10031689at2759"/>
<dbReference type="PAN-GO" id="O14640">
    <property type="GO annotations" value="4 GO annotations based on evolutionary models"/>
</dbReference>
<dbReference type="PhylomeDB" id="O14640"/>
<dbReference type="TreeFam" id="TF318198"/>
<dbReference type="PathwayCommons" id="O14640"/>
<dbReference type="Reactome" id="R-HSA-201681">
    <property type="pathway name" value="TCF dependent signaling in response to WNT"/>
</dbReference>
<dbReference type="Reactome" id="R-HSA-201688">
    <property type="pathway name" value="WNT mediated activation of DVL"/>
</dbReference>
<dbReference type="Reactome" id="R-HSA-4086400">
    <property type="pathway name" value="PCP/CE pathway"/>
</dbReference>
<dbReference type="Reactome" id="R-HSA-4641258">
    <property type="pathway name" value="Degradation of DVL"/>
</dbReference>
<dbReference type="Reactome" id="R-HSA-4641262">
    <property type="pathway name" value="Disassembly of the destruction complex and recruitment of AXIN to the membrane"/>
</dbReference>
<dbReference type="Reactome" id="R-HSA-5368598">
    <property type="pathway name" value="Negative regulation of TCF-dependent signaling by DVL-interacting proteins"/>
</dbReference>
<dbReference type="Reactome" id="R-HSA-5663220">
    <property type="pathway name" value="RHO GTPases Activate Formins"/>
</dbReference>
<dbReference type="Reactome" id="R-HSA-9673324">
    <property type="pathway name" value="WNT5:FZD7-mediated leishmania damping"/>
</dbReference>
<dbReference type="SignaLink" id="O14640"/>
<dbReference type="SIGNOR" id="O14640"/>
<dbReference type="BioGRID-ORCS" id="1855">
    <property type="hits" value="18 hits in 1154 CRISPR screens"/>
</dbReference>
<dbReference type="ChiTaRS" id="DVL1">
    <property type="organism name" value="human"/>
</dbReference>
<dbReference type="GeneWiki" id="DVL1"/>
<dbReference type="GenomeRNAi" id="1855"/>
<dbReference type="Pharos" id="O14640">
    <property type="development level" value="Tchem"/>
</dbReference>
<dbReference type="PRO" id="PR:O14640"/>
<dbReference type="Proteomes" id="UP000005640">
    <property type="component" value="Chromosome 1"/>
</dbReference>
<dbReference type="RNAct" id="O14640">
    <property type="molecule type" value="protein"/>
</dbReference>
<dbReference type="Bgee" id="ENSG00000107404">
    <property type="expression patterns" value="Expressed in hindlimb stylopod muscle and 209 other cell types or tissues"/>
</dbReference>
<dbReference type="ExpressionAtlas" id="O14640">
    <property type="expression patterns" value="baseline and differential"/>
</dbReference>
<dbReference type="GO" id="GO:0030136">
    <property type="term" value="C:clathrin-coated vesicle"/>
    <property type="evidence" value="ECO:0007669"/>
    <property type="project" value="Ensembl"/>
</dbReference>
<dbReference type="GO" id="GO:0031410">
    <property type="term" value="C:cytoplasmic vesicle"/>
    <property type="evidence" value="ECO:0000314"/>
    <property type="project" value="BHF-UCL"/>
</dbReference>
<dbReference type="GO" id="GO:0005829">
    <property type="term" value="C:cytosol"/>
    <property type="evidence" value="ECO:0000318"/>
    <property type="project" value="GO_Central"/>
</dbReference>
<dbReference type="GO" id="GO:0043197">
    <property type="term" value="C:dendritic spine"/>
    <property type="evidence" value="ECO:0007669"/>
    <property type="project" value="Ensembl"/>
</dbReference>
<dbReference type="GO" id="GO:0098978">
    <property type="term" value="C:glutamatergic synapse"/>
    <property type="evidence" value="ECO:0007669"/>
    <property type="project" value="Ensembl"/>
</dbReference>
<dbReference type="GO" id="GO:0030426">
    <property type="term" value="C:growth cone"/>
    <property type="evidence" value="ECO:0000314"/>
    <property type="project" value="ParkinsonsUK-UCL"/>
</dbReference>
<dbReference type="GO" id="GO:0016328">
    <property type="term" value="C:lateral plasma membrane"/>
    <property type="evidence" value="ECO:0000314"/>
    <property type="project" value="BHF-UCL"/>
</dbReference>
<dbReference type="GO" id="GO:0005874">
    <property type="term" value="C:microtubule"/>
    <property type="evidence" value="ECO:0007669"/>
    <property type="project" value="Ensembl"/>
</dbReference>
<dbReference type="GO" id="GO:0043005">
    <property type="term" value="C:neuron projection"/>
    <property type="evidence" value="ECO:0000314"/>
    <property type="project" value="ParkinsonsUK-UCL"/>
</dbReference>
<dbReference type="GO" id="GO:0043025">
    <property type="term" value="C:neuronal cell body"/>
    <property type="evidence" value="ECO:0007669"/>
    <property type="project" value="Ensembl"/>
</dbReference>
<dbReference type="GO" id="GO:0098992">
    <property type="term" value="C:neuronal dense core vesicle"/>
    <property type="evidence" value="ECO:0007669"/>
    <property type="project" value="Ensembl"/>
</dbReference>
<dbReference type="GO" id="GO:0014069">
    <property type="term" value="C:postsynaptic density"/>
    <property type="evidence" value="ECO:0007669"/>
    <property type="project" value="Ensembl"/>
</dbReference>
<dbReference type="GO" id="GO:0098793">
    <property type="term" value="C:presynapse"/>
    <property type="evidence" value="ECO:0007669"/>
    <property type="project" value="Ensembl"/>
</dbReference>
<dbReference type="GO" id="GO:0098685">
    <property type="term" value="C:Schaffer collateral - CA1 synapse"/>
    <property type="evidence" value="ECO:0007669"/>
    <property type="project" value="Ensembl"/>
</dbReference>
<dbReference type="GO" id="GO:0045202">
    <property type="term" value="C:synapse"/>
    <property type="evidence" value="ECO:0000250"/>
    <property type="project" value="BHF-UCL"/>
</dbReference>
<dbReference type="GO" id="GO:1990909">
    <property type="term" value="C:Wnt signalosome"/>
    <property type="evidence" value="ECO:0007669"/>
    <property type="project" value="Ensembl"/>
</dbReference>
<dbReference type="GO" id="GO:0008013">
    <property type="term" value="F:beta-catenin binding"/>
    <property type="evidence" value="ECO:0007669"/>
    <property type="project" value="Ensembl"/>
</dbReference>
<dbReference type="GO" id="GO:0019899">
    <property type="term" value="F:enzyme binding"/>
    <property type="evidence" value="ECO:0000353"/>
    <property type="project" value="UniProtKB"/>
</dbReference>
<dbReference type="GO" id="GO:0005109">
    <property type="term" value="F:frizzled binding"/>
    <property type="evidence" value="ECO:0000353"/>
    <property type="project" value="UniProtKB"/>
</dbReference>
<dbReference type="GO" id="GO:0042802">
    <property type="term" value="F:identical protein binding"/>
    <property type="evidence" value="ECO:0000353"/>
    <property type="project" value="IntAct"/>
</dbReference>
<dbReference type="GO" id="GO:0019901">
    <property type="term" value="F:protein kinase binding"/>
    <property type="evidence" value="ECO:0000353"/>
    <property type="project" value="BHF-UCL"/>
</dbReference>
<dbReference type="GO" id="GO:0031267">
    <property type="term" value="F:small GTPase binding"/>
    <property type="evidence" value="ECO:0007669"/>
    <property type="project" value="Ensembl"/>
</dbReference>
<dbReference type="GO" id="GO:0048675">
    <property type="term" value="P:axon extension"/>
    <property type="evidence" value="ECO:0007669"/>
    <property type="project" value="Ensembl"/>
</dbReference>
<dbReference type="GO" id="GO:0007411">
    <property type="term" value="P:axon guidance"/>
    <property type="evidence" value="ECO:0007669"/>
    <property type="project" value="Ensembl"/>
</dbReference>
<dbReference type="GO" id="GO:0060070">
    <property type="term" value="P:canonical Wnt signaling pathway"/>
    <property type="evidence" value="ECO:0000314"/>
    <property type="project" value="BHF-UCL"/>
</dbReference>
<dbReference type="GO" id="GO:0090103">
    <property type="term" value="P:cochlea morphogenesis"/>
    <property type="evidence" value="ECO:0007669"/>
    <property type="project" value="Ensembl"/>
</dbReference>
<dbReference type="GO" id="GO:0048668">
    <property type="term" value="P:collateral sprouting"/>
    <property type="evidence" value="ECO:0007669"/>
    <property type="project" value="Ensembl"/>
</dbReference>
<dbReference type="GO" id="GO:0022007">
    <property type="term" value="P:convergent extension involved in neural plate elongation"/>
    <property type="evidence" value="ECO:0007669"/>
    <property type="project" value="Ensembl"/>
</dbReference>
<dbReference type="GO" id="GO:0031122">
    <property type="term" value="P:cytoplasmic microtubule organization"/>
    <property type="evidence" value="ECO:0007669"/>
    <property type="project" value="Ensembl"/>
</dbReference>
<dbReference type="GO" id="GO:0048813">
    <property type="term" value="P:dendrite morphogenesis"/>
    <property type="evidence" value="ECO:0000250"/>
    <property type="project" value="BHF-UCL"/>
</dbReference>
<dbReference type="GO" id="GO:0060997">
    <property type="term" value="P:dendritic spine morphogenesis"/>
    <property type="evidence" value="ECO:0007669"/>
    <property type="project" value="Ensembl"/>
</dbReference>
<dbReference type="GO" id="GO:0001947">
    <property type="term" value="P:heart looping"/>
    <property type="evidence" value="ECO:0000250"/>
    <property type="project" value="BHF-UCL"/>
</dbReference>
<dbReference type="GO" id="GO:0035556">
    <property type="term" value="P:intracellular signal transduction"/>
    <property type="evidence" value="ECO:0007669"/>
    <property type="project" value="InterPro"/>
</dbReference>
<dbReference type="GO" id="GO:0021915">
    <property type="term" value="P:neural tube development"/>
    <property type="evidence" value="ECO:0000270"/>
    <property type="project" value="BHF-UCL"/>
</dbReference>
<dbReference type="GO" id="GO:0007528">
    <property type="term" value="P:neuromuscular junction development"/>
    <property type="evidence" value="ECO:0000250"/>
    <property type="project" value="BHF-UCL"/>
</dbReference>
<dbReference type="GO" id="GO:0007269">
    <property type="term" value="P:neurotransmitter secretion"/>
    <property type="evidence" value="ECO:0000250"/>
    <property type="project" value="BHF-UCL"/>
</dbReference>
<dbReference type="GO" id="GO:0035567">
    <property type="term" value="P:non-canonical Wnt signaling pathway"/>
    <property type="evidence" value="ECO:0000304"/>
    <property type="project" value="ARUK-UCL"/>
</dbReference>
<dbReference type="GO" id="GO:0003151">
    <property type="term" value="P:outflow tract morphogenesis"/>
    <property type="evidence" value="ECO:0000250"/>
    <property type="project" value="BHF-UCL"/>
</dbReference>
<dbReference type="GO" id="GO:2000463">
    <property type="term" value="P:positive regulation of excitatory postsynaptic potential"/>
    <property type="evidence" value="ECO:0007669"/>
    <property type="project" value="Ensembl"/>
</dbReference>
<dbReference type="GO" id="GO:0150012">
    <property type="term" value="P:positive regulation of neuron projection arborization"/>
    <property type="evidence" value="ECO:0000250"/>
    <property type="project" value="ARUK-UCL"/>
</dbReference>
<dbReference type="GO" id="GO:0010976">
    <property type="term" value="P:positive regulation of neuron projection development"/>
    <property type="evidence" value="ECO:0007669"/>
    <property type="project" value="Ensembl"/>
</dbReference>
<dbReference type="GO" id="GO:0032436">
    <property type="term" value="P:positive regulation of proteasomal ubiquitin-dependent protein catabolic process"/>
    <property type="evidence" value="ECO:0000315"/>
    <property type="project" value="BHF-UCL"/>
</dbReference>
<dbReference type="GO" id="GO:1905386">
    <property type="term" value="P:positive regulation of protein localization to presynapse"/>
    <property type="evidence" value="ECO:0000304"/>
    <property type="project" value="ParkinsonsUK-UCL"/>
</dbReference>
<dbReference type="GO" id="GO:0045944">
    <property type="term" value="P:positive regulation of transcription by RNA polymerase II"/>
    <property type="evidence" value="ECO:0000314"/>
    <property type="project" value="BHF-UCL"/>
</dbReference>
<dbReference type="GO" id="GO:0060134">
    <property type="term" value="P:prepulse inhibition"/>
    <property type="evidence" value="ECO:0007669"/>
    <property type="project" value="Ensembl"/>
</dbReference>
<dbReference type="GO" id="GO:0099054">
    <property type="term" value="P:presynapse assembly"/>
    <property type="evidence" value="ECO:0000304"/>
    <property type="project" value="ParkinsonsUK-UCL"/>
</dbReference>
<dbReference type="GO" id="GO:0035372">
    <property type="term" value="P:protein localization to microtubule"/>
    <property type="evidence" value="ECO:0007669"/>
    <property type="project" value="Ensembl"/>
</dbReference>
<dbReference type="GO" id="GO:0034504">
    <property type="term" value="P:protein localization to nucleus"/>
    <property type="evidence" value="ECO:0000315"/>
    <property type="project" value="BHF-UCL"/>
</dbReference>
<dbReference type="GO" id="GO:0050821">
    <property type="term" value="P:protein stabilization"/>
    <property type="evidence" value="ECO:0000314"/>
    <property type="project" value="ParkinsonsUK-UCL"/>
</dbReference>
<dbReference type="GO" id="GO:0043113">
    <property type="term" value="P:receptor clustering"/>
    <property type="evidence" value="ECO:0000250"/>
    <property type="project" value="BHF-UCL"/>
</dbReference>
<dbReference type="GO" id="GO:0006355">
    <property type="term" value="P:regulation of DNA-templated transcription"/>
    <property type="evidence" value="ECO:0000314"/>
    <property type="project" value="UniProtKB"/>
</dbReference>
<dbReference type="GO" id="GO:0099175">
    <property type="term" value="P:regulation of postsynapse organization"/>
    <property type="evidence" value="ECO:0007669"/>
    <property type="project" value="Ensembl"/>
</dbReference>
<dbReference type="GO" id="GO:0032880">
    <property type="term" value="P:regulation of protein localization"/>
    <property type="evidence" value="ECO:0000314"/>
    <property type="project" value="ParkinsonsUK-UCL"/>
</dbReference>
<dbReference type="GO" id="GO:2000300">
    <property type="term" value="P:regulation of synaptic vesicle exocytosis"/>
    <property type="evidence" value="ECO:0007669"/>
    <property type="project" value="Ensembl"/>
</dbReference>
<dbReference type="GO" id="GO:0071340">
    <property type="term" value="P:skeletal muscle acetylcholine-gated channel clustering"/>
    <property type="evidence" value="ECO:0007669"/>
    <property type="project" value="Ensembl"/>
</dbReference>
<dbReference type="GO" id="GO:0035176">
    <property type="term" value="P:social behavior"/>
    <property type="evidence" value="ECO:0007669"/>
    <property type="project" value="Ensembl"/>
</dbReference>
<dbReference type="GO" id="GO:0050808">
    <property type="term" value="P:synapse organization"/>
    <property type="evidence" value="ECO:0000250"/>
    <property type="project" value="BHF-UCL"/>
</dbReference>
<dbReference type="GO" id="GO:0016079">
    <property type="term" value="P:synaptic vesicle exocytosis"/>
    <property type="evidence" value="ECO:0007669"/>
    <property type="project" value="Ensembl"/>
</dbReference>
<dbReference type="GO" id="GO:0060071">
    <property type="term" value="P:Wnt signaling pathway, planar cell polarity pathway"/>
    <property type="evidence" value="ECO:0000314"/>
    <property type="project" value="BHF-UCL"/>
</dbReference>
<dbReference type="CDD" id="cd04438">
    <property type="entry name" value="DEP_dishevelled"/>
    <property type="match status" value="1"/>
</dbReference>
<dbReference type="CDD" id="cd06717">
    <property type="entry name" value="PDZ_Dishevelled-like"/>
    <property type="match status" value="1"/>
</dbReference>
<dbReference type="FunFam" id="2.40.240.130:FF:000001">
    <property type="entry name" value="Segment polarity protein dishevelled homolog DVL-1"/>
    <property type="match status" value="1"/>
</dbReference>
<dbReference type="FunFam" id="2.30.42.10:FF:000014">
    <property type="entry name" value="Segment polarity protein dishevelled homolog DVL-3"/>
    <property type="match status" value="1"/>
</dbReference>
<dbReference type="FunFam" id="1.10.10.10:FF:000040">
    <property type="entry name" value="segment polarity protein dishevelled homolog DVL-3"/>
    <property type="match status" value="1"/>
</dbReference>
<dbReference type="Gene3D" id="2.30.42.10">
    <property type="match status" value="1"/>
</dbReference>
<dbReference type="Gene3D" id="2.40.240.130">
    <property type="match status" value="1"/>
</dbReference>
<dbReference type="Gene3D" id="1.10.10.10">
    <property type="entry name" value="Winged helix-like DNA-binding domain superfamily/Winged helix DNA-binding domain"/>
    <property type="match status" value="1"/>
</dbReference>
<dbReference type="InterPro" id="IPR000591">
    <property type="entry name" value="DEP_dom"/>
</dbReference>
<dbReference type="InterPro" id="IPR024580">
    <property type="entry name" value="Dishevelled_C-dom"/>
</dbReference>
<dbReference type="InterPro" id="IPR008339">
    <property type="entry name" value="Dishevelled_fam"/>
</dbReference>
<dbReference type="InterPro" id="IPR003351">
    <property type="entry name" value="Dishevelled_protein_dom"/>
</dbReference>
<dbReference type="InterPro" id="IPR001158">
    <property type="entry name" value="DIX"/>
</dbReference>
<dbReference type="InterPro" id="IPR038207">
    <property type="entry name" value="DIX_dom_sf"/>
</dbReference>
<dbReference type="InterPro" id="IPR015506">
    <property type="entry name" value="Dsh/Dvl-rel"/>
</dbReference>
<dbReference type="InterPro" id="IPR001478">
    <property type="entry name" value="PDZ"/>
</dbReference>
<dbReference type="InterPro" id="IPR036034">
    <property type="entry name" value="PDZ_sf"/>
</dbReference>
<dbReference type="InterPro" id="IPR029071">
    <property type="entry name" value="Ubiquitin-like_domsf"/>
</dbReference>
<dbReference type="InterPro" id="IPR036388">
    <property type="entry name" value="WH-like_DNA-bd_sf"/>
</dbReference>
<dbReference type="InterPro" id="IPR036390">
    <property type="entry name" value="WH_DNA-bd_sf"/>
</dbReference>
<dbReference type="PANTHER" id="PTHR10878">
    <property type="entry name" value="SEGMENT POLARITY PROTEIN DISHEVELLED"/>
    <property type="match status" value="1"/>
</dbReference>
<dbReference type="PANTHER" id="PTHR10878:SF5">
    <property type="entry name" value="SEGMENT POLARITY PROTEIN DISHEVELLED HOMOLOG DVL-1-RELATED"/>
    <property type="match status" value="1"/>
</dbReference>
<dbReference type="Pfam" id="PF00610">
    <property type="entry name" value="DEP"/>
    <property type="match status" value="1"/>
</dbReference>
<dbReference type="Pfam" id="PF02377">
    <property type="entry name" value="Dishevelled"/>
    <property type="match status" value="1"/>
</dbReference>
<dbReference type="Pfam" id="PF00778">
    <property type="entry name" value="DIX"/>
    <property type="match status" value="1"/>
</dbReference>
<dbReference type="Pfam" id="PF12316">
    <property type="entry name" value="Dsh_C"/>
    <property type="match status" value="1"/>
</dbReference>
<dbReference type="Pfam" id="PF00595">
    <property type="entry name" value="PDZ"/>
    <property type="match status" value="1"/>
</dbReference>
<dbReference type="PRINTS" id="PR01760">
    <property type="entry name" value="DISHEVELLED"/>
</dbReference>
<dbReference type="PRINTS" id="PR01761">
    <property type="entry name" value="DISHEVELLED1"/>
</dbReference>
<dbReference type="SMART" id="SM00021">
    <property type="entry name" value="DAX"/>
    <property type="match status" value="1"/>
</dbReference>
<dbReference type="SMART" id="SM00049">
    <property type="entry name" value="DEP"/>
    <property type="match status" value="1"/>
</dbReference>
<dbReference type="SMART" id="SM00228">
    <property type="entry name" value="PDZ"/>
    <property type="match status" value="1"/>
</dbReference>
<dbReference type="SUPFAM" id="SSF50156">
    <property type="entry name" value="PDZ domain-like"/>
    <property type="match status" value="1"/>
</dbReference>
<dbReference type="SUPFAM" id="SSF54236">
    <property type="entry name" value="Ubiquitin-like"/>
    <property type="match status" value="1"/>
</dbReference>
<dbReference type="SUPFAM" id="SSF46785">
    <property type="entry name" value="Winged helix' DNA-binding domain"/>
    <property type="match status" value="1"/>
</dbReference>
<dbReference type="PROSITE" id="PS50186">
    <property type="entry name" value="DEP"/>
    <property type="match status" value="1"/>
</dbReference>
<dbReference type="PROSITE" id="PS50841">
    <property type="entry name" value="DIX"/>
    <property type="match status" value="1"/>
</dbReference>
<dbReference type="PROSITE" id="PS50106">
    <property type="entry name" value="PDZ"/>
    <property type="match status" value="1"/>
</dbReference>
<reference key="1">
    <citation type="journal article" date="1997" name="Genomics">
        <title>Human dishevelled genes constitute a DHR-containing multigene family.</title>
        <authorList>
            <person name="Semenov M.V."/>
            <person name="Snyder M."/>
        </authorList>
    </citation>
    <scope>NUCLEOTIDE SEQUENCE [MRNA] (ISOFORM 2)</scope>
</reference>
<reference key="2">
    <citation type="journal article" date="2006" name="Nature">
        <title>The DNA sequence and biological annotation of human chromosome 1.</title>
        <authorList>
            <person name="Gregory S.G."/>
            <person name="Barlow K.F."/>
            <person name="McLay K.E."/>
            <person name="Kaul R."/>
            <person name="Swarbreck D."/>
            <person name="Dunham A."/>
            <person name="Scott C.E."/>
            <person name="Howe K.L."/>
            <person name="Woodfine K."/>
            <person name="Spencer C.C.A."/>
            <person name="Jones M.C."/>
            <person name="Gillson C."/>
            <person name="Searle S."/>
            <person name="Zhou Y."/>
            <person name="Kokocinski F."/>
            <person name="McDonald L."/>
            <person name="Evans R."/>
            <person name="Phillips K."/>
            <person name="Atkinson A."/>
            <person name="Cooper R."/>
            <person name="Jones C."/>
            <person name="Hall R.E."/>
            <person name="Andrews T.D."/>
            <person name="Lloyd C."/>
            <person name="Ainscough R."/>
            <person name="Almeida J.P."/>
            <person name="Ambrose K.D."/>
            <person name="Anderson F."/>
            <person name="Andrew R.W."/>
            <person name="Ashwell R.I.S."/>
            <person name="Aubin K."/>
            <person name="Babbage A.K."/>
            <person name="Bagguley C.L."/>
            <person name="Bailey J."/>
            <person name="Beasley H."/>
            <person name="Bethel G."/>
            <person name="Bird C.P."/>
            <person name="Bray-Allen S."/>
            <person name="Brown J.Y."/>
            <person name="Brown A.J."/>
            <person name="Buckley D."/>
            <person name="Burton J."/>
            <person name="Bye J."/>
            <person name="Carder C."/>
            <person name="Chapman J.C."/>
            <person name="Clark S.Y."/>
            <person name="Clarke G."/>
            <person name="Clee C."/>
            <person name="Cobley V."/>
            <person name="Collier R.E."/>
            <person name="Corby N."/>
            <person name="Coville G.J."/>
            <person name="Davies J."/>
            <person name="Deadman R."/>
            <person name="Dunn M."/>
            <person name="Earthrowl M."/>
            <person name="Ellington A.G."/>
            <person name="Errington H."/>
            <person name="Frankish A."/>
            <person name="Frankland J."/>
            <person name="French L."/>
            <person name="Garner P."/>
            <person name="Garnett J."/>
            <person name="Gay L."/>
            <person name="Ghori M.R.J."/>
            <person name="Gibson R."/>
            <person name="Gilby L.M."/>
            <person name="Gillett W."/>
            <person name="Glithero R.J."/>
            <person name="Grafham D.V."/>
            <person name="Griffiths C."/>
            <person name="Griffiths-Jones S."/>
            <person name="Grocock R."/>
            <person name="Hammond S."/>
            <person name="Harrison E.S.I."/>
            <person name="Hart E."/>
            <person name="Haugen E."/>
            <person name="Heath P.D."/>
            <person name="Holmes S."/>
            <person name="Holt K."/>
            <person name="Howden P.J."/>
            <person name="Hunt A.R."/>
            <person name="Hunt S.E."/>
            <person name="Hunter G."/>
            <person name="Isherwood J."/>
            <person name="James R."/>
            <person name="Johnson C."/>
            <person name="Johnson D."/>
            <person name="Joy A."/>
            <person name="Kay M."/>
            <person name="Kershaw J.K."/>
            <person name="Kibukawa M."/>
            <person name="Kimberley A.M."/>
            <person name="King A."/>
            <person name="Knights A.J."/>
            <person name="Lad H."/>
            <person name="Laird G."/>
            <person name="Lawlor S."/>
            <person name="Leongamornlert D.A."/>
            <person name="Lloyd D.M."/>
            <person name="Loveland J."/>
            <person name="Lovell J."/>
            <person name="Lush M.J."/>
            <person name="Lyne R."/>
            <person name="Martin S."/>
            <person name="Mashreghi-Mohammadi M."/>
            <person name="Matthews L."/>
            <person name="Matthews N.S.W."/>
            <person name="McLaren S."/>
            <person name="Milne S."/>
            <person name="Mistry S."/>
            <person name="Moore M.J.F."/>
            <person name="Nickerson T."/>
            <person name="O'Dell C.N."/>
            <person name="Oliver K."/>
            <person name="Palmeiri A."/>
            <person name="Palmer S.A."/>
            <person name="Parker A."/>
            <person name="Patel D."/>
            <person name="Pearce A.V."/>
            <person name="Peck A.I."/>
            <person name="Pelan S."/>
            <person name="Phelps K."/>
            <person name="Phillimore B.J."/>
            <person name="Plumb R."/>
            <person name="Rajan J."/>
            <person name="Raymond C."/>
            <person name="Rouse G."/>
            <person name="Saenphimmachak C."/>
            <person name="Sehra H.K."/>
            <person name="Sheridan E."/>
            <person name="Shownkeen R."/>
            <person name="Sims S."/>
            <person name="Skuce C.D."/>
            <person name="Smith M."/>
            <person name="Steward C."/>
            <person name="Subramanian S."/>
            <person name="Sycamore N."/>
            <person name="Tracey A."/>
            <person name="Tromans A."/>
            <person name="Van Helmond Z."/>
            <person name="Wall M."/>
            <person name="Wallis J.M."/>
            <person name="White S."/>
            <person name="Whitehead S.L."/>
            <person name="Wilkinson J.E."/>
            <person name="Willey D.L."/>
            <person name="Williams H."/>
            <person name="Wilming L."/>
            <person name="Wray P.W."/>
            <person name="Wu Z."/>
            <person name="Coulson A."/>
            <person name="Vaudin M."/>
            <person name="Sulston J.E."/>
            <person name="Durbin R.M."/>
            <person name="Hubbard T."/>
            <person name="Wooster R."/>
            <person name="Dunham I."/>
            <person name="Carter N.P."/>
            <person name="McVean G."/>
            <person name="Ross M.T."/>
            <person name="Harrow J."/>
            <person name="Olson M.V."/>
            <person name="Beck S."/>
            <person name="Rogers J."/>
            <person name="Bentley D.R."/>
        </authorList>
    </citation>
    <scope>NUCLEOTIDE SEQUENCE [LARGE SCALE GENOMIC DNA]</scope>
</reference>
<reference key="3">
    <citation type="journal article" date="2001" name="Proc. Natl. Acad. Sci. U.S.A.">
        <title>beta-Arrestin1 modulates lymphoid enhancer factor transcriptional activity through interaction with phosphorylated dishevelled proteins.</title>
        <authorList>
            <person name="Chen W."/>
            <person name="Hu L.A."/>
            <person name="Semenov M.V."/>
            <person name="Yanagawa S."/>
            <person name="Kikuchi A."/>
            <person name="Lefkowitz R.J."/>
            <person name="Miller W.E."/>
        </authorList>
    </citation>
    <scope>INTERACTION WITH ARRB1</scope>
</reference>
<reference key="4">
    <citation type="journal article" date="2003" name="Genes Cells">
        <title>Identification and characterization of a novel Dvl-binding protein that suppresses Wnt signalling pathway.</title>
        <authorList>
            <person name="Oshita A."/>
            <person name="Kishida S."/>
            <person name="Kobayashi H."/>
            <person name="Michiue T."/>
            <person name="Asahara T."/>
            <person name="Asashima M."/>
            <person name="Kikuchi A."/>
        </authorList>
    </citation>
    <scope>INTERACTION WITH CCDC88C</scope>
</reference>
<reference key="5">
    <citation type="journal article" date="2004" name="Cell">
        <title>Mammalian Ryk is a Wnt coreceptor required for stimulation of neurite outgrowth.</title>
        <authorList>
            <person name="Lu W."/>
            <person name="Yamamoto V."/>
            <person name="Ortega B."/>
            <person name="Baltimore D."/>
        </authorList>
    </citation>
    <scope>INTERACTION WITH RYK</scope>
</reference>
<reference key="6">
    <citation type="journal article" date="2005" name="Nat. Genet.">
        <title>Inversin, the gene product mutated in nephronophthisis type II, functions as a molecular switch between Wnt signaling pathways.</title>
        <authorList>
            <person name="Simons M."/>
            <person name="Gloy J."/>
            <person name="Ganner A."/>
            <person name="Bullerkotte A."/>
            <person name="Bashkurov M."/>
            <person name="Kroenig C."/>
            <person name="Schermer B."/>
            <person name="Benzing T."/>
            <person name="Cabello O.A."/>
            <person name="Jenny A."/>
            <person name="Mlodzik M."/>
            <person name="Polok B."/>
            <person name="Driever W."/>
            <person name="Obara T."/>
            <person name="Walz G."/>
        </authorList>
    </citation>
    <scope>INTERACTION WITH INVS</scope>
</reference>
<reference key="7">
    <citation type="journal article" date="2010" name="J. Biol. Chem.">
        <title>Identification of transmembrane protein 88 (TMEM88) as a dishevelled-binding protein.</title>
        <authorList>
            <person name="Lee H.J."/>
            <person name="Finkelstein D."/>
            <person name="Li X."/>
            <person name="Wu D."/>
            <person name="Shi D.L."/>
            <person name="Zheng J.J."/>
        </authorList>
    </citation>
    <scope>INTERACTION WITH TMEM88</scope>
</reference>
<reference key="8">
    <citation type="journal article" date="2015" name="Am. J. Hum. Genet.">
        <title>DCDC2 mutations cause a renal-hepatic ciliopathy by disrupting Wnt signaling.</title>
        <authorList>
            <person name="Schueler M."/>
            <person name="Braun D.A."/>
            <person name="Chandrasekar G."/>
            <person name="Gee H.Y."/>
            <person name="Klasson T.D."/>
            <person name="Halbritter J."/>
            <person name="Bieder A."/>
            <person name="Porath J.D."/>
            <person name="Airik R."/>
            <person name="Zhou W."/>
            <person name="LoTurco J.J."/>
            <person name="Che A."/>
            <person name="Otto E.A."/>
            <person name="Boeckenhauer D."/>
            <person name="Sebire N.J."/>
            <person name="Honzik T."/>
            <person name="Harris P.C."/>
            <person name="Koon S.J."/>
            <person name="Gunay-Aygun M."/>
            <person name="Saunier S."/>
            <person name="Zerres K."/>
            <person name="Bruechle N.O."/>
            <person name="Drenth J.P."/>
            <person name="Pelletier L."/>
            <person name="Tapia-Paez I."/>
            <person name="Lifton R.P."/>
            <person name="Giles R.H."/>
            <person name="Kere J."/>
            <person name="Hildebrandt F."/>
        </authorList>
    </citation>
    <scope>INTERACTION WITH DCDC2</scope>
</reference>
<reference key="9">
    <citation type="journal article" date="2015" name="Am. J. Hum. Genet.">
        <title>DVL1 frameshift mutations clustering in the penultimate exon cause autosomal-dominant Robinow syndrome.</title>
        <authorList>
            <consortium name="Baylor-Hopkins Center for Mendelian Genomics"/>
            <person name="White J."/>
            <person name="Mazzeu J.F."/>
            <person name="Hoischen A."/>
            <person name="Jhangiani S.N."/>
            <person name="Gambin T."/>
            <person name="Alcino M.C."/>
            <person name="Penney S."/>
            <person name="Saraiva J.M."/>
            <person name="Hove H."/>
            <person name="Skovby F."/>
            <person name="Kayserili H."/>
            <person name="Estrella E."/>
            <person name="Vulto-van Silfhout A.T."/>
            <person name="Steehouwer M."/>
            <person name="Muzny D.M."/>
            <person name="Sutton V.R."/>
            <person name="Gibbs R.A."/>
            <person name="Lupski J.R."/>
            <person name="Brunner H.G."/>
            <person name="van Bon B.W."/>
            <person name="Carvalho C.M."/>
        </authorList>
    </citation>
    <scope>INVOLVEMENT IN DRS2</scope>
</reference>
<reference key="10">
    <citation type="journal article" date="2015" name="Am. J. Hum. Genet.">
        <title>Mutations in DVL1 cause an osteosclerotic form of Robinow syndrome.</title>
        <authorList>
            <person name="Bunn K.J."/>
            <person name="Daniel P."/>
            <person name="Roesken H.S."/>
            <person name="O'Neill A.C."/>
            <person name="Cameron-Christie S.R."/>
            <person name="Morgan T."/>
            <person name="Brunner H.G."/>
            <person name="Lai A."/>
            <person name="Kunst H.P."/>
            <person name="Markie D.M."/>
            <person name="Robertson S.P."/>
        </authorList>
    </citation>
    <scope>INVOLVEMENT IN DRS2</scope>
</reference>
<reference key="11">
    <citation type="journal article" date="2015" name="Dev. Cell">
        <title>FOXKs promote Wnt/beta-catenin signaling by translocating DVL into the nucleus.</title>
        <authorList>
            <person name="Wang W."/>
            <person name="Li X."/>
            <person name="Lee M."/>
            <person name="Jun S."/>
            <person name="Aziz K.E."/>
            <person name="Feng L."/>
            <person name="Tran M.K."/>
            <person name="Li N."/>
            <person name="McCrea P.D."/>
            <person name="Park J.I."/>
            <person name="Chen J."/>
        </authorList>
    </citation>
    <scope>INTERACTION WITH FOXK2</scope>
</reference>
<reference key="12">
    <citation type="journal article" date="2015" name="Elife">
        <title>Daple is a novel non-receptor GEF required for trimeric G protein activation in Wnt signaling.</title>
        <authorList>
            <person name="Aznar N."/>
            <person name="Midde K.K."/>
            <person name="Dunkel Y."/>
            <person name="Lopez-Sanchez I."/>
            <person name="Pavlova Y."/>
            <person name="Marivin A."/>
            <person name="Barbazan J."/>
            <person name="Murray F."/>
            <person name="Nitsche U."/>
            <person name="Janssen K.P."/>
            <person name="Willert K."/>
            <person name="Goel A."/>
            <person name="Abal M."/>
            <person name="Garcia-Marcos M."/>
            <person name="Ghosh P."/>
        </authorList>
    </citation>
    <scope>INTERACTION WITH CCDC88C</scope>
</reference>
<reference key="13">
    <citation type="journal article" date="2016" name="Nat. Cell Biol.">
        <title>The polycystin complex mediates Wnt/Ca(2+) signalling.</title>
        <authorList>
            <person name="Kim S."/>
            <person name="Nie H."/>
            <person name="Nesin V."/>
            <person name="Tran U."/>
            <person name="Outeda P."/>
            <person name="Bai C.X."/>
            <person name="Keeling J."/>
            <person name="Maskey D."/>
            <person name="Watnick T."/>
            <person name="Wessely O."/>
            <person name="Tsiokas L."/>
        </authorList>
    </citation>
    <scope>INTERACTION WITH PKD1</scope>
</reference>
<comment type="function">
    <text>Participates in Wnt signaling by binding to the cytoplasmic C-terminus of frizzled family members and transducing the Wnt signal to down-stream effectors. Plays a role both in canonical and non-canonical Wnt signaling. Plays a role in the signal transduction pathways mediated by multiple Wnt genes. Required for LEF1 activation upon WNT1 and WNT3A signaling. DVL1 and PAK1 form a ternary complex with MUSK which is important for MUSK-dependent regulation of AChR clustering during the formation of the neuromuscular junction (NMJ).</text>
</comment>
<comment type="subunit">
    <text evidence="2 3 8 9 10 11 12 13 14 17 18">Interacts with CXXC4. Interacts (via PDZ domain) with NXN (By similarity). Interacts with BRD7 and INVS. Interacts (via PDZ domain) with VANGL1 and VANGL2 (via C-terminus). Interacts with ARRB1; the interaction is enhanced by phosphorylation of DVL1. Interacts with CYLD (By similarity). Interacts (via PDZ domain) with RYK. Self-associates (via DIX domain) and forms higher homooligomers. Interacts (via PDZ domain) with DACT1 and FZD7, where DACT1 and FZD7 compete for the same binding site (By similarity). Interacts (via DEP domain) with MUSK; the interaction is direct and mediates the formation a DVL1, MUSK and PAK1 ternary complex involved in AChR clustering (By similarity). Interacts (via PDZ domain) with TMEM88. Interacts with DCDC2. Interacts with FOXK2 (PubMed:25805136). Interacts with PKD1 (via extracellular domain) (PubMed:27214281). Interacts (via PDZ domain) with CCDC88C/DAPLE; competes with CCDC88C for binding to frizzled receptor FZD7 and dissociates from CCDC88C following initiation of non-canonical Wnt signaling when CCDC88C displaces DVL1 from ligand-activated FZD7 (PubMed:14750955, PubMed:26126266).</text>
</comment>
<comment type="interaction">
    <interactant intactId="EBI-723489">
        <id>O14640</id>
    </interactant>
    <interactant intactId="EBI-727707">
        <id>P25054</id>
        <label>APC</label>
    </interactant>
    <organismsDiffer>false</organismsDiffer>
    <experiments>6</experiments>
</comment>
<comment type="interaction">
    <interactant intactId="EBI-723489">
        <id>O14640</id>
    </interactant>
    <interactant intactId="EBI-749343">
        <id>P49674</id>
        <label>CSNK1E</label>
    </interactant>
    <organismsDiffer>false</organismsDiffer>
    <experiments>6</experiments>
</comment>
<comment type="interaction">
    <interactant intactId="EBI-723489">
        <id>O14640</id>
    </interactant>
    <interactant intactId="EBI-723489">
        <id>O14640</id>
        <label>DVL1</label>
    </interactant>
    <organismsDiffer>false</organismsDiffer>
    <experiments>2</experiments>
</comment>
<comment type="interaction">
    <interactant intactId="EBI-723489">
        <id>O14640</id>
    </interactant>
    <interactant intactId="EBI-740850">
        <id>O14641</id>
        <label>DVL2</label>
    </interactant>
    <organismsDiffer>false</organismsDiffer>
    <experiments>4</experiments>
</comment>
<comment type="interaction">
    <interactant intactId="EBI-723489">
        <id>O14640</id>
    </interactant>
    <interactant intactId="EBI-739789">
        <id>Q92997</id>
        <label>DVL3</label>
    </interactant>
    <organismsDiffer>false</organismsDiffer>
    <experiments>5</experiments>
</comment>
<comment type="interaction">
    <interactant intactId="EBI-723489">
        <id>O14640</id>
    </interactant>
    <interactant intactId="EBI-1046810">
        <id>Q6P3W7</id>
        <label>SCYL2</label>
    </interactant>
    <organismsDiffer>false</organismsDiffer>
    <experiments>4</experiments>
</comment>
<comment type="interaction">
    <interactant intactId="EBI-723489">
        <id>O14640</id>
    </interactant>
    <interactant intactId="EBI-1802965">
        <id>Q96EB6</id>
        <label>SIRT1</label>
    </interactant>
    <organismsDiffer>false</organismsDiffer>
    <experiments>2</experiments>
</comment>
<comment type="interaction">
    <interactant intactId="EBI-723489">
        <id>O14640</id>
    </interactant>
    <interactant intactId="EBI-749713">
        <id>Q14186</id>
        <label>TFDP1</label>
    </interactant>
    <organismsDiffer>false</organismsDiffer>
    <experiments>3</experiments>
</comment>
<comment type="interaction">
    <interactant intactId="EBI-723489">
        <id>O14640</id>
    </interactant>
    <interactant intactId="EBI-747743">
        <id>Q9GZV5</id>
        <label>WWTR1</label>
    </interactant>
    <organismsDiffer>false</organismsDiffer>
    <experiments>2</experiments>
</comment>
<comment type="interaction">
    <interactant intactId="EBI-723489">
        <id>O14640</id>
    </interactant>
    <interactant intactId="EBI-6857773">
        <id>O70239</id>
        <label>Axin1</label>
    </interactant>
    <organismsDiffer>true</organismsDiffer>
    <experiments>12</experiments>
</comment>
<comment type="interaction">
    <interactant intactId="EBI-723489">
        <id>O14640</id>
    </interactant>
    <interactant intactId="EBI-9344960">
        <id>Q9EQC9</id>
        <label>Cxxc4</label>
    </interactant>
    <organismsDiffer>true</organismsDiffer>
    <experiments>5</experiments>
</comment>
<comment type="interaction">
    <interactant intactId="EBI-6504027">
        <id>O14640-2</id>
    </interactant>
    <interactant intactId="EBI-5323863">
        <id>Q5S007</id>
        <label>LRRK2</label>
    </interactant>
    <organismsDiffer>false</organismsDiffer>
    <experiments>7</experiments>
</comment>
<comment type="subcellular location">
    <subcellularLocation>
        <location evidence="1">Cell membrane</location>
        <topology evidence="1">Peripheral membrane protein</topology>
        <orientation evidence="1">Cytoplasmic side</orientation>
    </subcellularLocation>
    <subcellularLocation>
        <location evidence="1">Cytoplasm</location>
        <location evidence="1">Cytosol</location>
    </subcellularLocation>
    <subcellularLocation>
        <location evidence="1">Cytoplasmic vesicle</location>
    </subcellularLocation>
    <text evidence="1">Localizes at the cell membrane upon interaction with frizzled family members.</text>
</comment>
<comment type="alternative products">
    <event type="alternative splicing"/>
    <isoform>
        <id>O14640-1</id>
        <name>1</name>
        <sequence type="displayed"/>
    </isoform>
    <isoform>
        <id>O14640-2</id>
        <name>2</name>
        <sequence type="described" ref="VSP_024460"/>
    </isoform>
</comment>
<comment type="domain">
    <text evidence="1">The DIX domain promotes homooligomerization.</text>
</comment>
<comment type="domain">
    <text evidence="1">The DEP domain mediates interaction with the cell membrane.</text>
</comment>
<comment type="PTM">
    <text evidence="1">Ubiquitinated; undergoes both 'Lys-48'-linked ubiquitination, leading to its subsequent degradation by the ubiquitin-proteasome pathway, and 'Lys-63'-linked ubiquitination. The interaction with INVS is required for ubiquitination. Deubiquitinated by CYLD, which acts on 'Lys-63'-linked ubiquitin chains (By similarity).</text>
</comment>
<comment type="disease" evidence="15 16">
    <disease id="DI-04392">
        <name>Robinow syndrome, autosomal dominant 2</name>
        <acronym>DRS2</acronym>
        <description>A rare skeletal dysplasia syndrome characterized by dysmorphic features resembling a fetal face, mesomelic limb shortening, hypoplastic external genitalia in males, costovertebral segmentation defects, and renal anomalies.</description>
        <dbReference type="MIM" id="616331"/>
    </disease>
    <text>The disease is caused by variants affecting the gene represented in this entry.</text>
</comment>
<comment type="similarity">
    <text evidence="20">Belongs to the DSH family.</text>
</comment>
<comment type="online information" name="Atlas of Genetics and Cytogenetics in Oncology and Haematology">
    <link uri="https://atlasgeneticsoncology.org/gene/463/DVL1"/>
</comment>
<proteinExistence type="evidence at protein level"/>
<gene>
    <name type="primary">DVL1</name>
</gene>
<keyword id="KW-0002">3D-structure</keyword>
<keyword id="KW-0025">Alternative splicing</keyword>
<keyword id="KW-1003">Cell membrane</keyword>
<keyword id="KW-0963">Cytoplasm</keyword>
<keyword id="KW-0968">Cytoplasmic vesicle</keyword>
<keyword id="KW-0217">Developmental protein</keyword>
<keyword id="KW-0242">Dwarfism</keyword>
<keyword id="KW-0472">Membrane</keyword>
<keyword id="KW-0597">Phosphoprotein</keyword>
<keyword id="KW-1267">Proteomics identification</keyword>
<keyword id="KW-1185">Reference proteome</keyword>
<keyword id="KW-0832">Ubl conjugation</keyword>
<keyword id="KW-0879">Wnt signaling pathway</keyword>
<sequence length="695" mass="75187">MAETKIIYHMDEEETPYLVKLPVAPERVTLADFKNVLSNRPVHAYKFFFKSMDQDFGVVKEEIFDDNAKLPCFNGRVVSWLVLAEGAHSDAGSQGTDSHTDLPPPLERTGGIGDSRPPSFHPNVASSRDGMDNETGTESMVSHRRERARRRNREEAARTNGHPRGDRRRDVGLPPDSASTALSSELESSSFVDSDEDGSTSRLSSSTEQSTSSRLIRKHKRRRRKQRLRQADRASSFSSITDSTMSLNIVTVTLNMERHHFLGISIVGQSNDRGDGGIYIGSIMKGGAVAADGRIEPGDMLLQVNDVNFENMSNDDAVRVLREIVSQTGPISLTVAKCWDPTPRSYFTVPRADPVRPIDPAAWLSHTAALTGALPRYGTSPCSSAVTRTSSSSLTSSVPGAPQLEEAPLTVKSDMSAVVRVMQLPDSGLEIRDRMWLKITIANAVIGADVVDWLYTHVEGFKERREARKYASSLLKHGFLRHTVNKITFSEQCYYVFGDLCSNLATLNLNSGSSGTSDQDTLAPLPHPAAPWPLGQGYPYQYPGPPPCFPPAYQDPGFSYGSGSTGSQQSEGSKSSGSTRSSRRAPGREKERRAAGAGGSGSESDHTAPSGVGSSWRERPAGQLSRGSSPRSQASATAPGLPPPHPTTKAYTVVGGPPGGPPVRELAAVPPELTGSRQSFQKAMGNPCEFFVDIM</sequence>
<name>DVL1_HUMAN</name>
<evidence type="ECO:0000250" key="1"/>
<evidence type="ECO:0000250" key="2">
    <source>
        <dbReference type="UniProtKB" id="P51141"/>
    </source>
</evidence>
<evidence type="ECO:0000250" key="3">
    <source>
        <dbReference type="UniProtKB" id="Q9WVB9"/>
    </source>
</evidence>
<evidence type="ECO:0000255" key="4">
    <source>
        <dbReference type="PROSITE-ProRule" id="PRU00066"/>
    </source>
</evidence>
<evidence type="ECO:0000255" key="5">
    <source>
        <dbReference type="PROSITE-ProRule" id="PRU00069"/>
    </source>
</evidence>
<evidence type="ECO:0000255" key="6">
    <source>
        <dbReference type="PROSITE-ProRule" id="PRU00143"/>
    </source>
</evidence>
<evidence type="ECO:0000256" key="7">
    <source>
        <dbReference type="SAM" id="MobiDB-lite"/>
    </source>
</evidence>
<evidence type="ECO:0000269" key="8">
    <source>
    </source>
</evidence>
<evidence type="ECO:0000269" key="9">
    <source>
    </source>
</evidence>
<evidence type="ECO:0000269" key="10">
    <source>
    </source>
</evidence>
<evidence type="ECO:0000269" key="11">
    <source>
    </source>
</evidence>
<evidence type="ECO:0000269" key="12">
    <source>
    </source>
</evidence>
<evidence type="ECO:0000269" key="13">
    <source>
    </source>
</evidence>
<evidence type="ECO:0000269" key="14">
    <source>
    </source>
</evidence>
<evidence type="ECO:0000269" key="15">
    <source>
    </source>
</evidence>
<evidence type="ECO:0000269" key="16">
    <source>
    </source>
</evidence>
<evidence type="ECO:0000269" key="17">
    <source>
    </source>
</evidence>
<evidence type="ECO:0000269" key="18">
    <source>
    </source>
</evidence>
<evidence type="ECO:0000303" key="19">
    <source>
    </source>
</evidence>
<evidence type="ECO:0000305" key="20"/>
<evidence type="ECO:0007829" key="21">
    <source>
        <dbReference type="PDB" id="6LCB"/>
    </source>
</evidence>
<organism>
    <name type="scientific">Homo sapiens</name>
    <name type="common">Human</name>
    <dbReference type="NCBI Taxonomy" id="9606"/>
    <lineage>
        <taxon>Eukaryota</taxon>
        <taxon>Metazoa</taxon>
        <taxon>Chordata</taxon>
        <taxon>Craniata</taxon>
        <taxon>Vertebrata</taxon>
        <taxon>Euteleostomi</taxon>
        <taxon>Mammalia</taxon>
        <taxon>Eutheria</taxon>
        <taxon>Euarchontoglires</taxon>
        <taxon>Primates</taxon>
        <taxon>Haplorrhini</taxon>
        <taxon>Catarrhini</taxon>
        <taxon>Hominidae</taxon>
        <taxon>Homo</taxon>
    </lineage>
</organism>
<protein>
    <recommendedName>
        <fullName>Segment polarity protein dishevelled homolog DVL-1</fullName>
        <shortName>Dishevelled-1</shortName>
    </recommendedName>
    <alternativeName>
        <fullName>DSH homolog 1</fullName>
    </alternativeName>
</protein>